<name>Y2081_BACCZ</name>
<protein>
    <recommendedName>
        <fullName evidence="1">UPF0346 protein BCE33L2081</fullName>
    </recommendedName>
</protein>
<dbReference type="EMBL" id="CP000001">
    <property type="protein sequence ID" value="AAU18177.1"/>
    <property type="molecule type" value="Genomic_DNA"/>
</dbReference>
<dbReference type="RefSeq" id="WP_000750724.1">
    <property type="nucleotide sequence ID" value="NZ_CP009968.1"/>
</dbReference>
<dbReference type="SMR" id="Q63BP5"/>
<dbReference type="KEGG" id="bcz:BCE33L2081"/>
<dbReference type="PATRIC" id="fig|288681.22.peg.3440"/>
<dbReference type="Proteomes" id="UP000002612">
    <property type="component" value="Chromosome"/>
</dbReference>
<dbReference type="Gene3D" id="1.10.150.260">
    <property type="entry name" value="YozE SAM-like"/>
    <property type="match status" value="1"/>
</dbReference>
<dbReference type="HAMAP" id="MF_01538">
    <property type="entry name" value="UPF0346"/>
    <property type="match status" value="1"/>
</dbReference>
<dbReference type="InterPro" id="IPR010673">
    <property type="entry name" value="UPF0346"/>
</dbReference>
<dbReference type="InterPro" id="IPR023089">
    <property type="entry name" value="YozE_SAM-like"/>
</dbReference>
<dbReference type="InterPro" id="IPR036806">
    <property type="entry name" value="YozE_SAM-like_sf"/>
</dbReference>
<dbReference type="NCBIfam" id="NF010193">
    <property type="entry name" value="PRK13672.1"/>
    <property type="match status" value="1"/>
</dbReference>
<dbReference type="Pfam" id="PF06855">
    <property type="entry name" value="YozE_SAM_like"/>
    <property type="match status" value="1"/>
</dbReference>
<dbReference type="PIRSF" id="PIRSF037262">
    <property type="entry name" value="UCP037262"/>
    <property type="match status" value="1"/>
</dbReference>
<dbReference type="SUPFAM" id="SSF140652">
    <property type="entry name" value="YozE-like"/>
    <property type="match status" value="1"/>
</dbReference>
<evidence type="ECO:0000255" key="1">
    <source>
        <dbReference type="HAMAP-Rule" id="MF_01538"/>
    </source>
</evidence>
<comment type="similarity">
    <text evidence="1">Belongs to the UPF0346 family.</text>
</comment>
<proteinExistence type="inferred from homology"/>
<reference key="1">
    <citation type="journal article" date="2006" name="J. Bacteriol.">
        <title>Pathogenomic sequence analysis of Bacillus cereus and Bacillus thuringiensis isolates closely related to Bacillus anthracis.</title>
        <authorList>
            <person name="Han C.S."/>
            <person name="Xie G."/>
            <person name="Challacombe J.F."/>
            <person name="Altherr M.R."/>
            <person name="Bhotika S.S."/>
            <person name="Bruce D."/>
            <person name="Campbell C.S."/>
            <person name="Campbell M.L."/>
            <person name="Chen J."/>
            <person name="Chertkov O."/>
            <person name="Cleland C."/>
            <person name="Dimitrijevic M."/>
            <person name="Doggett N.A."/>
            <person name="Fawcett J.J."/>
            <person name="Glavina T."/>
            <person name="Goodwin L.A."/>
            <person name="Hill K.K."/>
            <person name="Hitchcock P."/>
            <person name="Jackson P.J."/>
            <person name="Keim P."/>
            <person name="Kewalramani A.R."/>
            <person name="Longmire J."/>
            <person name="Lucas S."/>
            <person name="Malfatti S."/>
            <person name="McMurry K."/>
            <person name="Meincke L.J."/>
            <person name="Misra M."/>
            <person name="Moseman B.L."/>
            <person name="Mundt M."/>
            <person name="Munk A.C."/>
            <person name="Okinaka R.T."/>
            <person name="Parson-Quintana B."/>
            <person name="Reilly L.P."/>
            <person name="Richardson P."/>
            <person name="Robinson D.L."/>
            <person name="Rubin E."/>
            <person name="Saunders E."/>
            <person name="Tapia R."/>
            <person name="Tesmer J.G."/>
            <person name="Thayer N."/>
            <person name="Thompson L.S."/>
            <person name="Tice H."/>
            <person name="Ticknor L.O."/>
            <person name="Wills P.L."/>
            <person name="Brettin T.S."/>
            <person name="Gilna P."/>
        </authorList>
    </citation>
    <scope>NUCLEOTIDE SEQUENCE [LARGE SCALE GENOMIC DNA]</scope>
    <source>
        <strain>ZK / E33L</strain>
    </source>
</reference>
<gene>
    <name type="ordered locus">BCE33L2081</name>
</gene>
<sequence>MKKTFYHYMMKHRAALFSNEISNLAEAMYDDLSFPKQSEDYDEISSYLELSGMLESMSIFDEAWDLYIQDR</sequence>
<accession>Q63BP5</accession>
<feature type="chain" id="PRO_0000164267" description="UPF0346 protein BCE33L2081">
    <location>
        <begin position="1"/>
        <end position="71"/>
    </location>
</feature>
<organism>
    <name type="scientific">Bacillus cereus (strain ZK / E33L)</name>
    <dbReference type="NCBI Taxonomy" id="288681"/>
    <lineage>
        <taxon>Bacteria</taxon>
        <taxon>Bacillati</taxon>
        <taxon>Bacillota</taxon>
        <taxon>Bacilli</taxon>
        <taxon>Bacillales</taxon>
        <taxon>Bacillaceae</taxon>
        <taxon>Bacillus</taxon>
        <taxon>Bacillus cereus group</taxon>
    </lineage>
</organism>